<feature type="chain" id="PRO_0000078575" description="Chaperone protein DnaK">
    <location>
        <begin position="1"/>
        <end position="606"/>
    </location>
</feature>
<feature type="region of interest" description="Disordered" evidence="2">
    <location>
        <begin position="576"/>
        <end position="606"/>
    </location>
</feature>
<feature type="compositionally biased region" description="Basic and acidic residues" evidence="2">
    <location>
        <begin position="597"/>
        <end position="606"/>
    </location>
</feature>
<feature type="modified residue" description="Phosphothreonine; by autocatalysis" evidence="1">
    <location>
        <position position="174"/>
    </location>
</feature>
<accession>Q8RB68</accession>
<evidence type="ECO:0000255" key="1">
    <source>
        <dbReference type="HAMAP-Rule" id="MF_00332"/>
    </source>
</evidence>
<evidence type="ECO:0000256" key="2">
    <source>
        <dbReference type="SAM" id="MobiDB-lite"/>
    </source>
</evidence>
<comment type="function">
    <text evidence="1">Acts as a chaperone.</text>
</comment>
<comment type="induction">
    <text evidence="1">By stress conditions e.g. heat shock.</text>
</comment>
<comment type="similarity">
    <text evidence="1">Belongs to the heat shock protein 70 family.</text>
</comment>
<keyword id="KW-0067">ATP-binding</keyword>
<keyword id="KW-0143">Chaperone</keyword>
<keyword id="KW-0547">Nucleotide-binding</keyword>
<keyword id="KW-0597">Phosphoprotein</keyword>
<keyword id="KW-1185">Reference proteome</keyword>
<keyword id="KW-0346">Stress response</keyword>
<name>DNAK_CALS4</name>
<gene>
    <name evidence="1" type="primary">dnaK</name>
    <name type="ordered locus">TTE0955</name>
</gene>
<sequence length="606" mass="66029">MGKVIGIDLGTTFSCVAVMEGGQPVVIPNSEGTRTTPSVVAFTKEGERLVGHPARRQAIINPERTIMSIKRHMGTDYKVKIDDKEYTPQEISAMILQKLKADAEAYLGEKVTQAVITVPAYFNDSQRQATKDAGRIAGLEVLRIINEPTAAALAYGLDKEGNQKVMVYDLGGGTFDVSILEIGDGVFEVLATSGNNHLGGDDFDQRIIDWLADNFQKEHGIDLRKDRMALQRLKEAAERAKIELSSAMVTNINLPFITADASGPKHIDVNLTRAKFEELISDLVESTVGPVKQALSDAGLKPEDIDKVLLVGGSTRIPLVQETVKKIMGKEPHKGINPDEAVAIGAAIQAAVLAGEIKDILLLDVTPLSLGIETLGGVFTKIIERNTTIPVRKSQIFTTAADNQTSVEIHVLQGERPLAKDNKSLGRFILSGIPPAPRGVPQIEVTFDIDANGIVHVSAKDLATGKSQQITITGSTNLSEEEIQRMINEAKQYEEQDRKKREEIEIRNRADSLIYQAEKTMKDLGDKMTQAEKDEINKEIENVRKALEGTDVEAIKAASEKLSEAFYKVSTRLYQQAAGSANPGGSQGTSQGNVYEADYKVEDDNK</sequence>
<organism>
    <name type="scientific">Caldanaerobacter subterraneus subsp. tengcongensis (strain DSM 15242 / JCM 11007 / NBRC 100824 / MB4)</name>
    <name type="common">Thermoanaerobacter tengcongensis</name>
    <dbReference type="NCBI Taxonomy" id="273068"/>
    <lineage>
        <taxon>Bacteria</taxon>
        <taxon>Bacillati</taxon>
        <taxon>Bacillota</taxon>
        <taxon>Clostridia</taxon>
        <taxon>Thermoanaerobacterales</taxon>
        <taxon>Thermoanaerobacteraceae</taxon>
        <taxon>Caldanaerobacter</taxon>
    </lineage>
</organism>
<reference key="1">
    <citation type="journal article" date="2002" name="Genome Res.">
        <title>A complete sequence of the T. tengcongensis genome.</title>
        <authorList>
            <person name="Bao Q."/>
            <person name="Tian Y."/>
            <person name="Li W."/>
            <person name="Xu Z."/>
            <person name="Xuan Z."/>
            <person name="Hu S."/>
            <person name="Dong W."/>
            <person name="Yang J."/>
            <person name="Chen Y."/>
            <person name="Xue Y."/>
            <person name="Xu Y."/>
            <person name="Lai X."/>
            <person name="Huang L."/>
            <person name="Dong X."/>
            <person name="Ma Y."/>
            <person name="Ling L."/>
            <person name="Tan H."/>
            <person name="Chen R."/>
            <person name="Wang J."/>
            <person name="Yu J."/>
            <person name="Yang H."/>
        </authorList>
    </citation>
    <scope>NUCLEOTIDE SEQUENCE [LARGE SCALE GENOMIC DNA]</scope>
    <source>
        <strain>DSM 15242 / JCM 11007 / NBRC 100824 / MB4</strain>
    </source>
</reference>
<dbReference type="EMBL" id="AE008691">
    <property type="protein sequence ID" value="AAM24211.1"/>
    <property type="molecule type" value="Genomic_DNA"/>
</dbReference>
<dbReference type="RefSeq" id="WP_011025330.1">
    <property type="nucleotide sequence ID" value="NZ_JANUCV010000001.1"/>
</dbReference>
<dbReference type="SMR" id="Q8RB68"/>
<dbReference type="STRING" id="273068.TTE0955"/>
<dbReference type="KEGG" id="tte:TTE0955"/>
<dbReference type="eggNOG" id="COG0443">
    <property type="taxonomic scope" value="Bacteria"/>
</dbReference>
<dbReference type="HOGENOM" id="CLU_005965_2_1_9"/>
<dbReference type="OrthoDB" id="9766019at2"/>
<dbReference type="Proteomes" id="UP000000555">
    <property type="component" value="Chromosome"/>
</dbReference>
<dbReference type="GO" id="GO:0005524">
    <property type="term" value="F:ATP binding"/>
    <property type="evidence" value="ECO:0007669"/>
    <property type="project" value="UniProtKB-UniRule"/>
</dbReference>
<dbReference type="GO" id="GO:0140662">
    <property type="term" value="F:ATP-dependent protein folding chaperone"/>
    <property type="evidence" value="ECO:0007669"/>
    <property type="project" value="InterPro"/>
</dbReference>
<dbReference type="GO" id="GO:0051082">
    <property type="term" value="F:unfolded protein binding"/>
    <property type="evidence" value="ECO:0007669"/>
    <property type="project" value="InterPro"/>
</dbReference>
<dbReference type="CDD" id="cd10234">
    <property type="entry name" value="ASKHA_NBD_HSP70_DnaK-like"/>
    <property type="match status" value="1"/>
</dbReference>
<dbReference type="FunFam" id="2.60.34.10:FF:000014">
    <property type="entry name" value="Chaperone protein DnaK HSP70"/>
    <property type="match status" value="1"/>
</dbReference>
<dbReference type="FunFam" id="1.20.1270.10:FF:000001">
    <property type="entry name" value="Molecular chaperone DnaK"/>
    <property type="match status" value="1"/>
</dbReference>
<dbReference type="FunFam" id="3.30.420.40:FF:000071">
    <property type="entry name" value="Molecular chaperone DnaK"/>
    <property type="match status" value="1"/>
</dbReference>
<dbReference type="FunFam" id="3.90.640.10:FF:000003">
    <property type="entry name" value="Molecular chaperone DnaK"/>
    <property type="match status" value="1"/>
</dbReference>
<dbReference type="Gene3D" id="1.20.1270.10">
    <property type="match status" value="1"/>
</dbReference>
<dbReference type="Gene3D" id="3.30.420.40">
    <property type="match status" value="2"/>
</dbReference>
<dbReference type="Gene3D" id="3.90.640.10">
    <property type="entry name" value="Actin, Chain A, domain 4"/>
    <property type="match status" value="1"/>
</dbReference>
<dbReference type="Gene3D" id="2.60.34.10">
    <property type="entry name" value="Substrate Binding Domain Of DNAk, Chain A, domain 1"/>
    <property type="match status" value="1"/>
</dbReference>
<dbReference type="HAMAP" id="MF_00332">
    <property type="entry name" value="DnaK"/>
    <property type="match status" value="1"/>
</dbReference>
<dbReference type="InterPro" id="IPR043129">
    <property type="entry name" value="ATPase_NBD"/>
</dbReference>
<dbReference type="InterPro" id="IPR012725">
    <property type="entry name" value="Chaperone_DnaK"/>
</dbReference>
<dbReference type="InterPro" id="IPR018181">
    <property type="entry name" value="Heat_shock_70_CS"/>
</dbReference>
<dbReference type="InterPro" id="IPR029048">
    <property type="entry name" value="HSP70_C_sf"/>
</dbReference>
<dbReference type="InterPro" id="IPR029047">
    <property type="entry name" value="HSP70_peptide-bd_sf"/>
</dbReference>
<dbReference type="InterPro" id="IPR013126">
    <property type="entry name" value="Hsp_70_fam"/>
</dbReference>
<dbReference type="NCBIfam" id="NF001413">
    <property type="entry name" value="PRK00290.1"/>
    <property type="match status" value="1"/>
</dbReference>
<dbReference type="NCBIfam" id="NF003520">
    <property type="entry name" value="PRK05183.1"/>
    <property type="match status" value="1"/>
</dbReference>
<dbReference type="NCBIfam" id="TIGR02350">
    <property type="entry name" value="prok_dnaK"/>
    <property type="match status" value="1"/>
</dbReference>
<dbReference type="PANTHER" id="PTHR19375">
    <property type="entry name" value="HEAT SHOCK PROTEIN 70KDA"/>
    <property type="match status" value="1"/>
</dbReference>
<dbReference type="Pfam" id="PF00012">
    <property type="entry name" value="HSP70"/>
    <property type="match status" value="1"/>
</dbReference>
<dbReference type="PRINTS" id="PR00301">
    <property type="entry name" value="HEATSHOCK70"/>
</dbReference>
<dbReference type="SUPFAM" id="SSF53067">
    <property type="entry name" value="Actin-like ATPase domain"/>
    <property type="match status" value="2"/>
</dbReference>
<dbReference type="SUPFAM" id="SSF100934">
    <property type="entry name" value="Heat shock protein 70kD (HSP70), C-terminal subdomain"/>
    <property type="match status" value="1"/>
</dbReference>
<dbReference type="SUPFAM" id="SSF100920">
    <property type="entry name" value="Heat shock protein 70kD (HSP70), peptide-binding domain"/>
    <property type="match status" value="1"/>
</dbReference>
<dbReference type="PROSITE" id="PS00297">
    <property type="entry name" value="HSP70_1"/>
    <property type="match status" value="1"/>
</dbReference>
<dbReference type="PROSITE" id="PS00329">
    <property type="entry name" value="HSP70_2"/>
    <property type="match status" value="1"/>
</dbReference>
<dbReference type="PROSITE" id="PS01036">
    <property type="entry name" value="HSP70_3"/>
    <property type="match status" value="1"/>
</dbReference>
<protein>
    <recommendedName>
        <fullName evidence="1">Chaperone protein DnaK</fullName>
    </recommendedName>
    <alternativeName>
        <fullName evidence="1">HSP70</fullName>
    </alternativeName>
    <alternativeName>
        <fullName evidence="1">Heat shock 70 kDa protein</fullName>
    </alternativeName>
    <alternativeName>
        <fullName evidence="1">Heat shock protein 70</fullName>
    </alternativeName>
</protein>
<proteinExistence type="inferred from homology"/>